<gene>
    <name type="primary">nifV</name>
</gene>
<proteinExistence type="inferred from homology"/>
<organism>
    <name type="scientific">Azotobacter vinelandii</name>
    <dbReference type="NCBI Taxonomy" id="354"/>
    <lineage>
        <taxon>Bacteria</taxon>
        <taxon>Pseudomonadati</taxon>
        <taxon>Pseudomonadota</taxon>
        <taxon>Gammaproteobacteria</taxon>
        <taxon>Pseudomonadales</taxon>
        <taxon>Pseudomonadaceae</taxon>
        <taxon>Azotobacter</taxon>
    </lineage>
</organism>
<accession>P05342</accession>
<reference key="1">
    <citation type="journal article" date="1987" name="J. Bacteriol.">
        <title>Comparative organization of nitrogen fixation-specific genes from Azotobacter vinelandii and Klebsiella pneumoniae: DNA sequence of the nifUSV genes.</title>
        <authorList>
            <person name="Beynon J."/>
            <person name="Ally A."/>
            <person name="Cannon M."/>
            <person name="Cannon F."/>
            <person name="Jacobson M.R."/>
            <person name="Cash V.L."/>
            <person name="Dean D.R."/>
        </authorList>
    </citation>
    <scope>NUCLEOTIDE SEQUENCE [GENOMIC DNA]</scope>
</reference>
<reference key="2">
    <citation type="journal article" date="1989" name="J. Bacteriol.">
        <title>Physical and genetic map of the major nif gene cluster from Azotobacter vinelandii.</title>
        <authorList>
            <person name="Jacobson M.R."/>
            <person name="Brigle K.E."/>
            <person name="Bennett L.T."/>
            <person name="Setterquist R.A."/>
            <person name="Wilson M.S."/>
            <person name="Cash V.L."/>
            <person name="Beynon J."/>
            <person name="Newton W.E."/>
            <person name="Dean D.R."/>
        </authorList>
    </citation>
    <scope>NUCLEOTIDE SEQUENCE [GENOMIC DNA]</scope>
    <scope>DISRUPTION PHENOTYPE</scope>
    <source>
        <strain>ATCC 13705 / OP1 / DSM 366 / NCIMB 11614 / LMG 3878 / UW</strain>
    </source>
</reference>
<evidence type="ECO:0000255" key="1">
    <source>
        <dbReference type="PROSITE-ProRule" id="PRU01151"/>
    </source>
</evidence>
<evidence type="ECO:0000269" key="2">
    <source>
    </source>
</evidence>
<evidence type="ECO:0000305" key="3"/>
<keyword id="KW-0535">Nitrogen fixation</keyword>
<keyword id="KW-0808">Transferase</keyword>
<sequence length="385" mass="41653">MASVIIDDTTLRDGEQSAGVAFNADEKIAIARALAELGVPELEIGIPSMGEEEREVMHAIAGLGLSSRLLAWCRLCDVDLAAARSTGVTMVDLSLPVSDLMLHHKLNRDRDWALREVARLVGEARMAGLEVCLGCEDASRADLEFVVQVGEVAQAAGARRLRFADTVGVMEPFGMLDRFRFLSRRLDMELEVHAHDDFGLATANTLAAVMGGATHINTTVNGLGERAGNAALEECVLALKNLHGIDTGIDTRGIPAISALVERASGRQVAWQKSVVGAGVFTHEAGIHVDGLLKHRRNYEGLNPDELGRSHSLVLGKHSGAHMVRNTYRDLGIELADWQSQALLGRIRAFSTRTKRRSPQPAELQDFYRQLCEQGNPELAAGGMA</sequence>
<protein>
    <recommendedName>
        <fullName>Homocitrate synthase</fullName>
        <ecNumber>2.3.3.14</ecNumber>
    </recommendedName>
</protein>
<name>NIFV_AZOVI</name>
<feature type="chain" id="PRO_0000140460" description="Homocitrate synthase">
    <location>
        <begin position="1"/>
        <end position="385"/>
    </location>
</feature>
<feature type="domain" description="Pyruvate carboxyltransferase" evidence="1">
    <location>
        <begin position="4"/>
        <end position="255"/>
    </location>
</feature>
<feature type="sequence conflict" description="In Ref. 1; AAA22169." evidence="3" ref="1">
    <original>R</original>
    <variation>P</variation>
    <location>
        <position position="160"/>
    </location>
</feature>
<dbReference type="EC" id="2.3.3.14"/>
<dbReference type="EMBL" id="M17349">
    <property type="protein sequence ID" value="AAA22169.1"/>
    <property type="molecule type" value="Genomic_DNA"/>
</dbReference>
<dbReference type="EMBL" id="M20568">
    <property type="protein sequence ID" value="AAA64727.1"/>
    <property type="molecule type" value="Genomic_DNA"/>
</dbReference>
<dbReference type="PIR" id="S29758">
    <property type="entry name" value="S29758"/>
</dbReference>
<dbReference type="SMR" id="P05342"/>
<dbReference type="BioCyc" id="MetaCyc:MONOMER-19489"/>
<dbReference type="SABIO-RK" id="P05342"/>
<dbReference type="GO" id="GO:0004410">
    <property type="term" value="F:homocitrate synthase activity"/>
    <property type="evidence" value="ECO:0007669"/>
    <property type="project" value="UniProtKB-EC"/>
</dbReference>
<dbReference type="GO" id="GO:0009058">
    <property type="term" value="P:biosynthetic process"/>
    <property type="evidence" value="ECO:0007669"/>
    <property type="project" value="UniProtKB-ARBA"/>
</dbReference>
<dbReference type="GO" id="GO:0019752">
    <property type="term" value="P:carboxylic acid metabolic process"/>
    <property type="evidence" value="ECO:0007669"/>
    <property type="project" value="InterPro"/>
</dbReference>
<dbReference type="GO" id="GO:0009399">
    <property type="term" value="P:nitrogen fixation"/>
    <property type="evidence" value="ECO:0007669"/>
    <property type="project" value="UniProtKB-KW"/>
</dbReference>
<dbReference type="CDD" id="cd07939">
    <property type="entry name" value="DRE_TIM_NifV"/>
    <property type="match status" value="1"/>
</dbReference>
<dbReference type="Gene3D" id="1.10.238.260">
    <property type="match status" value="1"/>
</dbReference>
<dbReference type="Gene3D" id="3.20.20.70">
    <property type="entry name" value="Aldolase class I"/>
    <property type="match status" value="1"/>
</dbReference>
<dbReference type="InterPro" id="IPR002034">
    <property type="entry name" value="AIPM/Hcit_synth_CS"/>
</dbReference>
<dbReference type="InterPro" id="IPR013785">
    <property type="entry name" value="Aldolase_TIM"/>
</dbReference>
<dbReference type="InterPro" id="IPR054691">
    <property type="entry name" value="LeuA/HCS_post-cat"/>
</dbReference>
<dbReference type="InterPro" id="IPR013477">
    <property type="entry name" value="NifV/FrbC"/>
</dbReference>
<dbReference type="InterPro" id="IPR000891">
    <property type="entry name" value="PYR_CT"/>
</dbReference>
<dbReference type="NCBIfam" id="TIGR02660">
    <property type="entry name" value="nifV_homocitr"/>
    <property type="match status" value="1"/>
</dbReference>
<dbReference type="PANTHER" id="PTHR42880">
    <property type="entry name" value="HOMOCITRATE SYNTHASE"/>
    <property type="match status" value="1"/>
</dbReference>
<dbReference type="PANTHER" id="PTHR42880:SF1">
    <property type="entry name" value="ISOPROPYLMALATE_HOMOCITRATE_CITRAMALATE SYNTHASE FAMILY PROTEIN"/>
    <property type="match status" value="1"/>
</dbReference>
<dbReference type="Pfam" id="PF22617">
    <property type="entry name" value="HCS_D2"/>
    <property type="match status" value="1"/>
</dbReference>
<dbReference type="Pfam" id="PF00682">
    <property type="entry name" value="HMGL-like"/>
    <property type="match status" value="1"/>
</dbReference>
<dbReference type="SUPFAM" id="SSF51569">
    <property type="entry name" value="Aldolase"/>
    <property type="match status" value="1"/>
</dbReference>
<dbReference type="PROSITE" id="PS00815">
    <property type="entry name" value="AIPM_HOMOCIT_SYNTH_1"/>
    <property type="match status" value="1"/>
</dbReference>
<dbReference type="PROSITE" id="PS00816">
    <property type="entry name" value="AIPM_HOMOCIT_SYNTH_2"/>
    <property type="match status" value="1"/>
</dbReference>
<dbReference type="PROSITE" id="PS50991">
    <property type="entry name" value="PYR_CT"/>
    <property type="match status" value="1"/>
</dbReference>
<comment type="function">
    <text>This protein is a Fe-Mo-cofactor biosynthetic component.</text>
</comment>
<comment type="catalytic activity">
    <reaction>
        <text>acetyl-CoA + 2-oxoglutarate + H2O = (2R)-homocitrate + CoA + H(+)</text>
        <dbReference type="Rhea" id="RHEA:12929"/>
        <dbReference type="ChEBI" id="CHEBI:15377"/>
        <dbReference type="ChEBI" id="CHEBI:15378"/>
        <dbReference type="ChEBI" id="CHEBI:16810"/>
        <dbReference type="ChEBI" id="CHEBI:57287"/>
        <dbReference type="ChEBI" id="CHEBI:57288"/>
        <dbReference type="ChEBI" id="CHEBI:58884"/>
        <dbReference type="EC" id="2.3.3.14"/>
    </reaction>
</comment>
<comment type="disruption phenotype">
    <text evidence="2">Fixes nitrogen very poorly; has very slow diazotrophic growth on nitrogen-free agar plates. A double nifS-nifV deletion no longer fixes nitrogen.</text>
</comment>
<comment type="similarity">
    <text evidence="3">Belongs to the alpha-IPM synthase/homocitrate synthase family.</text>
</comment>